<evidence type="ECO:0000255" key="1">
    <source>
        <dbReference type="HAMAP-Rule" id="MF_00184"/>
    </source>
</evidence>
<evidence type="ECO:0000255" key="2">
    <source>
        <dbReference type="PROSITE-ProRule" id="PRU01228"/>
    </source>
</evidence>
<protein>
    <recommendedName>
        <fullName evidence="1">Threonine--tRNA ligase</fullName>
        <ecNumber evidence="1">6.1.1.3</ecNumber>
    </recommendedName>
    <alternativeName>
        <fullName evidence="1">Threonyl-tRNA synthetase</fullName>
        <shortName evidence="1">ThrRS</shortName>
    </alternativeName>
</protein>
<gene>
    <name evidence="1" type="primary">thrS</name>
    <name type="ordered locus">GWCH70_2661</name>
</gene>
<sequence>MSEMIRITFPDGAVKEFPKGTTTEQIAASISPGLKKKAIAGKLNDRFIDLRTPIQEDGSISIITQDMPEALDILRHSTAHLMAQAIKRLYKNVKLGVGPVIENGFYYDIDMEESLTPEDLPKIEQEMRKIVKENLEIVRKEVSREEAIRLYEEIGDDLKLELINDIPEGETISIYEQGEFFDLCRGVHVPSTGKIKEFKLLNISGAYWRGDSNNKMLQRIYGTAFFKKEDLDEYLRQLQEAKERDHRKLGKELELFMTSQKVGQGLPLWLPKGATIRRIIERYIVDKEIELGYQHVYTPVLGSVELYKTSGHWDHYKDNMFPPMEMDNEQLVLRPMNCPHHMMIYKSKIHSYRELPIRIAELGTMHRYEMSGALSGLQRVRGMTLNDAHIFVRPDQIKDEFKRVVNLILEVYKDFGLDEYSFRLSYRDPHDKEKYYDDDEMWEKAQNMLREAMDELGLEYYEAEGEAAFYGPKLDVQVRTALGKDETLSTVQLDFLLPERFDLTYIGEDGKPHRPVVIHRGVVSTMERFVAFLIEEYKGAFPTWLAPVQVEVIPVSPAAHLDYAYKVKEALQSQGFRVEVDERDEKIGYKIREAQIQKIPYMLVVGDKEMAENAVNVRKYGEQKSETMSLDDFIAALKAEVRRN</sequence>
<comment type="function">
    <text evidence="1">Catalyzes the attachment of threonine to tRNA(Thr) in a two-step reaction: L-threonine is first activated by ATP to form Thr-AMP and then transferred to the acceptor end of tRNA(Thr). Also edits incorrectly charged L-seryl-tRNA(Thr).</text>
</comment>
<comment type="catalytic activity">
    <reaction evidence="1">
        <text>tRNA(Thr) + L-threonine + ATP = L-threonyl-tRNA(Thr) + AMP + diphosphate + H(+)</text>
        <dbReference type="Rhea" id="RHEA:24624"/>
        <dbReference type="Rhea" id="RHEA-COMP:9670"/>
        <dbReference type="Rhea" id="RHEA-COMP:9704"/>
        <dbReference type="ChEBI" id="CHEBI:15378"/>
        <dbReference type="ChEBI" id="CHEBI:30616"/>
        <dbReference type="ChEBI" id="CHEBI:33019"/>
        <dbReference type="ChEBI" id="CHEBI:57926"/>
        <dbReference type="ChEBI" id="CHEBI:78442"/>
        <dbReference type="ChEBI" id="CHEBI:78534"/>
        <dbReference type="ChEBI" id="CHEBI:456215"/>
        <dbReference type="EC" id="6.1.1.3"/>
    </reaction>
</comment>
<comment type="cofactor">
    <cofactor evidence="1">
        <name>Zn(2+)</name>
        <dbReference type="ChEBI" id="CHEBI:29105"/>
    </cofactor>
    <text evidence="1">Binds 1 zinc ion per subunit.</text>
</comment>
<comment type="subunit">
    <text evidence="1">Homodimer.</text>
</comment>
<comment type="subcellular location">
    <subcellularLocation>
        <location evidence="1">Cytoplasm</location>
    </subcellularLocation>
</comment>
<comment type="similarity">
    <text evidence="1">Belongs to the class-II aminoacyl-tRNA synthetase family.</text>
</comment>
<keyword id="KW-0030">Aminoacyl-tRNA synthetase</keyword>
<keyword id="KW-0067">ATP-binding</keyword>
<keyword id="KW-0963">Cytoplasm</keyword>
<keyword id="KW-0436">Ligase</keyword>
<keyword id="KW-0479">Metal-binding</keyword>
<keyword id="KW-0547">Nucleotide-binding</keyword>
<keyword id="KW-0648">Protein biosynthesis</keyword>
<keyword id="KW-0694">RNA-binding</keyword>
<keyword id="KW-0820">tRNA-binding</keyword>
<keyword id="KW-0862">Zinc</keyword>
<accession>C5D639</accession>
<name>SYT_GEOSW</name>
<proteinExistence type="inferred from homology"/>
<dbReference type="EC" id="6.1.1.3" evidence="1"/>
<dbReference type="EMBL" id="CP001638">
    <property type="protein sequence ID" value="ACS25355.1"/>
    <property type="molecule type" value="Genomic_DNA"/>
</dbReference>
<dbReference type="SMR" id="C5D639"/>
<dbReference type="STRING" id="471223.GWCH70_2661"/>
<dbReference type="KEGG" id="gwc:GWCH70_2661"/>
<dbReference type="eggNOG" id="COG0441">
    <property type="taxonomic scope" value="Bacteria"/>
</dbReference>
<dbReference type="HOGENOM" id="CLU_008554_0_1_9"/>
<dbReference type="OrthoDB" id="9802304at2"/>
<dbReference type="GO" id="GO:0005737">
    <property type="term" value="C:cytoplasm"/>
    <property type="evidence" value="ECO:0007669"/>
    <property type="project" value="UniProtKB-SubCell"/>
</dbReference>
<dbReference type="GO" id="GO:0005524">
    <property type="term" value="F:ATP binding"/>
    <property type="evidence" value="ECO:0007669"/>
    <property type="project" value="UniProtKB-UniRule"/>
</dbReference>
<dbReference type="GO" id="GO:0140096">
    <property type="term" value="F:catalytic activity, acting on a protein"/>
    <property type="evidence" value="ECO:0007669"/>
    <property type="project" value="UniProtKB-ARBA"/>
</dbReference>
<dbReference type="GO" id="GO:0046872">
    <property type="term" value="F:metal ion binding"/>
    <property type="evidence" value="ECO:0007669"/>
    <property type="project" value="UniProtKB-KW"/>
</dbReference>
<dbReference type="GO" id="GO:0004829">
    <property type="term" value="F:threonine-tRNA ligase activity"/>
    <property type="evidence" value="ECO:0007669"/>
    <property type="project" value="UniProtKB-UniRule"/>
</dbReference>
<dbReference type="GO" id="GO:0016740">
    <property type="term" value="F:transferase activity"/>
    <property type="evidence" value="ECO:0007669"/>
    <property type="project" value="UniProtKB-ARBA"/>
</dbReference>
<dbReference type="GO" id="GO:0000049">
    <property type="term" value="F:tRNA binding"/>
    <property type="evidence" value="ECO:0007669"/>
    <property type="project" value="UniProtKB-KW"/>
</dbReference>
<dbReference type="GO" id="GO:0006435">
    <property type="term" value="P:threonyl-tRNA aminoacylation"/>
    <property type="evidence" value="ECO:0007669"/>
    <property type="project" value="UniProtKB-UniRule"/>
</dbReference>
<dbReference type="CDD" id="cd01667">
    <property type="entry name" value="TGS_ThrRS"/>
    <property type="match status" value="1"/>
</dbReference>
<dbReference type="CDD" id="cd00860">
    <property type="entry name" value="ThrRS_anticodon"/>
    <property type="match status" value="1"/>
</dbReference>
<dbReference type="CDD" id="cd00771">
    <property type="entry name" value="ThrRS_core"/>
    <property type="match status" value="1"/>
</dbReference>
<dbReference type="FunFam" id="3.10.20.30:FF:000005">
    <property type="entry name" value="Threonine--tRNA ligase"/>
    <property type="match status" value="1"/>
</dbReference>
<dbReference type="FunFam" id="3.30.54.20:FF:000002">
    <property type="entry name" value="Threonine--tRNA ligase"/>
    <property type="match status" value="1"/>
</dbReference>
<dbReference type="FunFam" id="3.30.930.10:FF:000002">
    <property type="entry name" value="Threonine--tRNA ligase"/>
    <property type="match status" value="1"/>
</dbReference>
<dbReference type="FunFam" id="3.40.50.800:FF:000001">
    <property type="entry name" value="Threonine--tRNA ligase"/>
    <property type="match status" value="1"/>
</dbReference>
<dbReference type="FunFam" id="3.30.980.10:FF:000005">
    <property type="entry name" value="Threonyl-tRNA synthetase, mitochondrial"/>
    <property type="match status" value="1"/>
</dbReference>
<dbReference type="Gene3D" id="3.10.20.30">
    <property type="match status" value="1"/>
</dbReference>
<dbReference type="Gene3D" id="3.30.54.20">
    <property type="match status" value="1"/>
</dbReference>
<dbReference type="Gene3D" id="3.40.50.800">
    <property type="entry name" value="Anticodon-binding domain"/>
    <property type="match status" value="1"/>
</dbReference>
<dbReference type="Gene3D" id="3.30.930.10">
    <property type="entry name" value="Bira Bifunctional Protein, Domain 2"/>
    <property type="match status" value="1"/>
</dbReference>
<dbReference type="Gene3D" id="3.30.980.10">
    <property type="entry name" value="Threonyl-trna Synthetase, Chain A, domain 2"/>
    <property type="match status" value="1"/>
</dbReference>
<dbReference type="HAMAP" id="MF_00184">
    <property type="entry name" value="Thr_tRNA_synth"/>
    <property type="match status" value="1"/>
</dbReference>
<dbReference type="InterPro" id="IPR002314">
    <property type="entry name" value="aa-tRNA-synt_IIb"/>
</dbReference>
<dbReference type="InterPro" id="IPR006195">
    <property type="entry name" value="aa-tRNA-synth_II"/>
</dbReference>
<dbReference type="InterPro" id="IPR045864">
    <property type="entry name" value="aa-tRNA-synth_II/BPL/LPL"/>
</dbReference>
<dbReference type="InterPro" id="IPR004154">
    <property type="entry name" value="Anticodon-bd"/>
</dbReference>
<dbReference type="InterPro" id="IPR036621">
    <property type="entry name" value="Anticodon-bd_dom_sf"/>
</dbReference>
<dbReference type="InterPro" id="IPR012675">
    <property type="entry name" value="Beta-grasp_dom_sf"/>
</dbReference>
<dbReference type="InterPro" id="IPR004095">
    <property type="entry name" value="TGS"/>
</dbReference>
<dbReference type="InterPro" id="IPR012676">
    <property type="entry name" value="TGS-like"/>
</dbReference>
<dbReference type="InterPro" id="IPR002320">
    <property type="entry name" value="Thr-tRNA-ligase_IIa"/>
</dbReference>
<dbReference type="InterPro" id="IPR018163">
    <property type="entry name" value="Thr/Ala-tRNA-synth_IIc_edit"/>
</dbReference>
<dbReference type="InterPro" id="IPR047246">
    <property type="entry name" value="ThrRS_anticodon"/>
</dbReference>
<dbReference type="InterPro" id="IPR033728">
    <property type="entry name" value="ThrRS_core"/>
</dbReference>
<dbReference type="InterPro" id="IPR012947">
    <property type="entry name" value="tRNA_SAD"/>
</dbReference>
<dbReference type="NCBIfam" id="TIGR00418">
    <property type="entry name" value="thrS"/>
    <property type="match status" value="1"/>
</dbReference>
<dbReference type="PANTHER" id="PTHR11451:SF56">
    <property type="entry name" value="THREONINE--TRNA LIGASE 1"/>
    <property type="match status" value="1"/>
</dbReference>
<dbReference type="PANTHER" id="PTHR11451">
    <property type="entry name" value="THREONINE-TRNA LIGASE"/>
    <property type="match status" value="1"/>
</dbReference>
<dbReference type="Pfam" id="PF03129">
    <property type="entry name" value="HGTP_anticodon"/>
    <property type="match status" value="1"/>
</dbReference>
<dbReference type="Pfam" id="PF02824">
    <property type="entry name" value="TGS"/>
    <property type="match status" value="1"/>
</dbReference>
<dbReference type="Pfam" id="PF00587">
    <property type="entry name" value="tRNA-synt_2b"/>
    <property type="match status" value="1"/>
</dbReference>
<dbReference type="Pfam" id="PF07973">
    <property type="entry name" value="tRNA_SAD"/>
    <property type="match status" value="1"/>
</dbReference>
<dbReference type="PRINTS" id="PR01047">
    <property type="entry name" value="TRNASYNTHTHR"/>
</dbReference>
<dbReference type="SMART" id="SM00863">
    <property type="entry name" value="tRNA_SAD"/>
    <property type="match status" value="1"/>
</dbReference>
<dbReference type="SUPFAM" id="SSF52954">
    <property type="entry name" value="Class II aaRS ABD-related"/>
    <property type="match status" value="1"/>
</dbReference>
<dbReference type="SUPFAM" id="SSF55681">
    <property type="entry name" value="Class II aaRS and biotin synthetases"/>
    <property type="match status" value="1"/>
</dbReference>
<dbReference type="SUPFAM" id="SSF81271">
    <property type="entry name" value="TGS-like"/>
    <property type="match status" value="1"/>
</dbReference>
<dbReference type="SUPFAM" id="SSF55186">
    <property type="entry name" value="ThrRS/AlaRS common domain"/>
    <property type="match status" value="1"/>
</dbReference>
<dbReference type="PROSITE" id="PS50862">
    <property type="entry name" value="AA_TRNA_LIGASE_II"/>
    <property type="match status" value="1"/>
</dbReference>
<dbReference type="PROSITE" id="PS51880">
    <property type="entry name" value="TGS"/>
    <property type="match status" value="1"/>
</dbReference>
<organism>
    <name type="scientific">Geobacillus sp. (strain WCH70)</name>
    <dbReference type="NCBI Taxonomy" id="471223"/>
    <lineage>
        <taxon>Bacteria</taxon>
        <taxon>Bacillati</taxon>
        <taxon>Bacillota</taxon>
        <taxon>Bacilli</taxon>
        <taxon>Bacillales</taxon>
        <taxon>Anoxybacillaceae</taxon>
        <taxon>Geobacillus</taxon>
    </lineage>
</organism>
<reference key="1">
    <citation type="submission" date="2009-06" db="EMBL/GenBank/DDBJ databases">
        <title>Complete sequence of chromosome of Geopacillus sp. WCH70.</title>
        <authorList>
            <consortium name="US DOE Joint Genome Institute"/>
            <person name="Lucas S."/>
            <person name="Copeland A."/>
            <person name="Lapidus A."/>
            <person name="Glavina del Rio T."/>
            <person name="Dalin E."/>
            <person name="Tice H."/>
            <person name="Bruce D."/>
            <person name="Goodwin L."/>
            <person name="Pitluck S."/>
            <person name="Chertkov O."/>
            <person name="Brettin T."/>
            <person name="Detter J.C."/>
            <person name="Han C."/>
            <person name="Larimer F."/>
            <person name="Land M."/>
            <person name="Hauser L."/>
            <person name="Kyrpides N."/>
            <person name="Mikhailova N."/>
            <person name="Brumm P."/>
            <person name="Mead D.A."/>
            <person name="Richardson P."/>
        </authorList>
    </citation>
    <scope>NUCLEOTIDE SEQUENCE [LARGE SCALE GENOMIC DNA]</scope>
    <source>
        <strain>WCH70</strain>
    </source>
</reference>
<feature type="chain" id="PRO_1000203907" description="Threonine--tRNA ligase">
    <location>
        <begin position="1"/>
        <end position="644"/>
    </location>
</feature>
<feature type="domain" description="TGS" evidence="2">
    <location>
        <begin position="3"/>
        <end position="64"/>
    </location>
</feature>
<feature type="region of interest" description="Catalytic" evidence="1">
    <location>
        <begin position="245"/>
        <end position="542"/>
    </location>
</feature>
<feature type="binding site" evidence="1">
    <location>
        <position position="338"/>
    </location>
    <ligand>
        <name>Zn(2+)</name>
        <dbReference type="ChEBI" id="CHEBI:29105"/>
    </ligand>
</feature>
<feature type="binding site" evidence="1">
    <location>
        <position position="389"/>
    </location>
    <ligand>
        <name>Zn(2+)</name>
        <dbReference type="ChEBI" id="CHEBI:29105"/>
    </ligand>
</feature>
<feature type="binding site" evidence="1">
    <location>
        <position position="519"/>
    </location>
    <ligand>
        <name>Zn(2+)</name>
        <dbReference type="ChEBI" id="CHEBI:29105"/>
    </ligand>
</feature>